<reference key="1">
    <citation type="journal article" date="2015" name="Toxins">
        <title>Molecular cloning and functional analysis of gene clusters for the biosynthesis of indole-diterpenes in Penicillium crustosum and P. janthinellum.</title>
        <authorList>
            <person name="Nicholson M.J."/>
            <person name="Eaton C.J."/>
            <person name="Starkel C."/>
            <person name="Tapper B.A."/>
            <person name="Cox M.P."/>
            <person name="Scott B."/>
        </authorList>
    </citation>
    <scope>NUCLEOTIDE SEQUENCE [GENOMIC DNA]</scope>
    <scope>IDENTIFICATION</scope>
    <scope>FUNCTION</scope>
    <scope>PATHWAY</scope>
    <source>
        <strain>PN2408</strain>
    </source>
</reference>
<dbReference type="EC" id="5.4.99.-" evidence="1"/>
<dbReference type="EMBL" id="KF280651">
    <property type="protein sequence ID" value="AGZ20473.1"/>
    <property type="molecule type" value="Genomic_DNA"/>
</dbReference>
<dbReference type="GlyCosmos" id="A0A0E3D8M3">
    <property type="glycosylation" value="1 site, No reported glycans"/>
</dbReference>
<dbReference type="GO" id="GO:0016020">
    <property type="term" value="C:membrane"/>
    <property type="evidence" value="ECO:0007669"/>
    <property type="project" value="UniProtKB-SubCell"/>
</dbReference>
<dbReference type="GO" id="GO:0016853">
    <property type="term" value="F:isomerase activity"/>
    <property type="evidence" value="ECO:0007669"/>
    <property type="project" value="UniProtKB-KW"/>
</dbReference>
<sequence>MSQTTTAALISLSVFAAYAKYYQSFQNGFIALLSDMADTKSLSGLPGGLHCEYTGFAPLDRFLTACNIFFWPVFQGEVPNLSLYGVAFASALVPMWLVIVLETHRGRRPVAALMELAFLAGPLVQCLGPGLVIPAILSRLPMSTPGTKLPFGFDIGFYPSSMIIGYILPLILAALPTPRVTAYEAKQQLIAVWQGWPVYTSLIMLIIHYLRPMRASQDWQLKIACAFAFACSTAGHLAFLWFARAKTASYHVFLPPIPWRELQVASIEAGVLRFLQWDYTLSASAMLVWTVASYCRATGKRIGQSSSVILIFGMAGVVFLGPCSVALLLYTSVALQRKGVTNYDCCRSS</sequence>
<evidence type="ECO:0000250" key="1">
    <source>
        <dbReference type="UniProtKB" id="A0A455R4Z0"/>
    </source>
</evidence>
<evidence type="ECO:0000255" key="2"/>
<evidence type="ECO:0000255" key="3">
    <source>
        <dbReference type="PROSITE-ProRule" id="PRU00498"/>
    </source>
</evidence>
<evidence type="ECO:0000269" key="4">
    <source>
    </source>
</evidence>
<evidence type="ECO:0000303" key="5">
    <source>
    </source>
</evidence>
<evidence type="ECO:0000305" key="6"/>
<evidence type="ECO:0000305" key="7">
    <source>
    </source>
</evidence>
<protein>
    <recommendedName>
        <fullName evidence="1">Terpene cyclase janA</fullName>
        <ecNumber evidence="1">5.4.99.-</ecNumber>
    </recommendedName>
    <alternativeName>
        <fullName evidence="5">Janthitremanes biosynthesis cluster protein A</fullName>
    </alternativeName>
</protein>
<keyword id="KW-0325">Glycoprotein</keyword>
<keyword id="KW-0413">Isomerase</keyword>
<keyword id="KW-0472">Membrane</keyword>
<keyword id="KW-0812">Transmembrane</keyword>
<keyword id="KW-1133">Transmembrane helix</keyword>
<feature type="chain" id="PRO_5002410104" description="Terpene cyclase janA">
    <location>
        <begin position="1"/>
        <end position="349"/>
    </location>
</feature>
<feature type="transmembrane region" description="Helical" evidence="2">
    <location>
        <begin position="81"/>
        <end position="101"/>
    </location>
</feature>
<feature type="transmembrane region" description="Helical" evidence="2">
    <location>
        <begin position="116"/>
        <end position="136"/>
    </location>
</feature>
<feature type="transmembrane region" description="Helical" evidence="2">
    <location>
        <begin position="155"/>
        <end position="175"/>
    </location>
</feature>
<feature type="transmembrane region" description="Helical" evidence="2">
    <location>
        <begin position="189"/>
        <end position="209"/>
    </location>
</feature>
<feature type="transmembrane region" description="Helical" evidence="2">
    <location>
        <begin position="223"/>
        <end position="243"/>
    </location>
</feature>
<feature type="transmembrane region" description="Helical" evidence="2">
    <location>
        <begin position="308"/>
        <end position="328"/>
    </location>
</feature>
<feature type="glycosylation site" description="N-linked (GlcNAc...) asparagine" evidence="3">
    <location>
        <position position="80"/>
    </location>
</feature>
<gene>
    <name evidence="5" type="primary">janA</name>
</gene>
<proteinExistence type="inferred from homology"/>
<comment type="function">
    <text evidence="4 7">Part of the gene cluster that mediates the biosynthesis of the indole diterpenes janthitremanes such as shearinine K or shearinine A (PubMed:26213965). The geranylgeranyl diphosphate (GGPP) synthase janG catalyzes the first step in janthitremane biosynthesis via conversion of farnesyl pyrophosphate and isopentyl pyrophosphate into geranylgeranyl pyrophosphate (GGPP) (PubMed:26213965). Condensation of indole-3-glycerol phosphate with GGPP by the prenyl transferase janC then forms 3-geranylgeranylindole (3-GGI) (PubMed:26213965). Epoxidation by the FAD-dependent monooxygenase janM leads to a epoxidized-GGI that is substrate of the terpene cyclase janB for cyclization to yield paspaline (PubMed:26213965). Paspaline is subsequently converted to 13-desoxypaspaline by the cytochrome P450 monooxygenase janP, via beta-PC-M6 in a series of alpha-face oxidations (Probable). The cytochrome P450 monooxygenase janQ is proposed to carry out sequential beta-face oxidation steps at C-7 and C-13 of 13-desoxypaspaline to form paspalicine and paspalinine respectively (Probable). The indole diterpene prenyltransferase janD may then convert paspalinine into shearinine K which is substrate of janO and/or additional enzymes for oxidation and cyclization to generate shearinine A (Probable).</text>
</comment>
<comment type="pathway">
    <text evidence="7">Secondary metabolite biosynthesis.</text>
</comment>
<comment type="subcellular location">
    <subcellularLocation>
        <location evidence="2">Membrane</location>
        <topology evidence="2">Multi-pass membrane protein</topology>
    </subcellularLocation>
</comment>
<comment type="similarity">
    <text evidence="6">Belongs to the membrane-bound ascI terpene cyclase family.</text>
</comment>
<name>JANA_PENJA</name>
<organism>
    <name type="scientific">Penicillium janthinellum</name>
    <name type="common">Penicillium vitale</name>
    <dbReference type="NCBI Taxonomy" id="5079"/>
    <lineage>
        <taxon>Eukaryota</taxon>
        <taxon>Fungi</taxon>
        <taxon>Dikarya</taxon>
        <taxon>Ascomycota</taxon>
        <taxon>Pezizomycotina</taxon>
        <taxon>Eurotiomycetes</taxon>
        <taxon>Eurotiomycetidae</taxon>
        <taxon>Eurotiales</taxon>
        <taxon>Aspergillaceae</taxon>
        <taxon>Penicillium</taxon>
    </lineage>
</organism>
<accession>A0A0E3D8M3</accession>